<protein>
    <recommendedName>
        <fullName evidence="1">Imidazoleglycerol-phosphate dehydratase</fullName>
        <shortName evidence="1">IGPD</shortName>
        <ecNumber evidence="1">4.2.1.19</ecNumber>
    </recommendedName>
</protein>
<feature type="chain" id="PRO_0000336314" description="Imidazoleglycerol-phosphate dehydratase">
    <location>
        <begin position="1"/>
        <end position="198"/>
    </location>
</feature>
<gene>
    <name evidence="1" type="primary">hisB</name>
    <name type="ordered locus">HEAR3067</name>
</gene>
<reference key="1">
    <citation type="journal article" date="2007" name="PLoS Genet.">
        <title>A tale of two oxidation states: bacterial colonization of arsenic-rich environments.</title>
        <authorList>
            <person name="Muller D."/>
            <person name="Medigue C."/>
            <person name="Koechler S."/>
            <person name="Barbe V."/>
            <person name="Barakat M."/>
            <person name="Talla E."/>
            <person name="Bonnefoy V."/>
            <person name="Krin E."/>
            <person name="Arsene-Ploetze F."/>
            <person name="Carapito C."/>
            <person name="Chandler M."/>
            <person name="Cournoyer B."/>
            <person name="Cruveiller S."/>
            <person name="Dossat C."/>
            <person name="Duval S."/>
            <person name="Heymann M."/>
            <person name="Leize E."/>
            <person name="Lieutaud A."/>
            <person name="Lievremont D."/>
            <person name="Makita Y."/>
            <person name="Mangenot S."/>
            <person name="Nitschke W."/>
            <person name="Ortet P."/>
            <person name="Perdrial N."/>
            <person name="Schoepp B."/>
            <person name="Siguier P."/>
            <person name="Simeonova D.D."/>
            <person name="Rouy Z."/>
            <person name="Segurens B."/>
            <person name="Turlin E."/>
            <person name="Vallenet D."/>
            <person name="van Dorsselaer A."/>
            <person name="Weiss S."/>
            <person name="Weissenbach J."/>
            <person name="Lett M.-C."/>
            <person name="Danchin A."/>
            <person name="Bertin P.N."/>
        </authorList>
    </citation>
    <scope>NUCLEOTIDE SEQUENCE [LARGE SCALE GENOMIC DNA]</scope>
    <source>
        <strain>ULPAs1</strain>
    </source>
</reference>
<keyword id="KW-0028">Amino-acid biosynthesis</keyword>
<keyword id="KW-0963">Cytoplasm</keyword>
<keyword id="KW-0368">Histidine biosynthesis</keyword>
<keyword id="KW-0456">Lyase</keyword>
<keyword id="KW-1185">Reference proteome</keyword>
<name>HIS7_HERAR</name>
<comment type="catalytic activity">
    <reaction evidence="1">
        <text>D-erythro-1-(imidazol-4-yl)glycerol 3-phosphate = 3-(imidazol-4-yl)-2-oxopropyl phosphate + H2O</text>
        <dbReference type="Rhea" id="RHEA:11040"/>
        <dbReference type="ChEBI" id="CHEBI:15377"/>
        <dbReference type="ChEBI" id="CHEBI:57766"/>
        <dbReference type="ChEBI" id="CHEBI:58278"/>
        <dbReference type="EC" id="4.2.1.19"/>
    </reaction>
</comment>
<comment type="pathway">
    <text evidence="1">Amino-acid biosynthesis; L-histidine biosynthesis; L-histidine from 5-phospho-alpha-D-ribose 1-diphosphate: step 6/9.</text>
</comment>
<comment type="subcellular location">
    <subcellularLocation>
        <location evidence="1">Cytoplasm</location>
    </subcellularLocation>
</comment>
<comment type="similarity">
    <text evidence="1">Belongs to the imidazoleglycerol-phosphate dehydratase family.</text>
</comment>
<organism>
    <name type="scientific">Herminiimonas arsenicoxydans</name>
    <dbReference type="NCBI Taxonomy" id="204773"/>
    <lineage>
        <taxon>Bacteria</taxon>
        <taxon>Pseudomonadati</taxon>
        <taxon>Pseudomonadota</taxon>
        <taxon>Betaproteobacteria</taxon>
        <taxon>Burkholderiales</taxon>
        <taxon>Oxalobacteraceae</taxon>
        <taxon>Herminiimonas</taxon>
    </lineage>
</organism>
<dbReference type="EC" id="4.2.1.19" evidence="1"/>
<dbReference type="EMBL" id="CU207211">
    <property type="protein sequence ID" value="CAL63176.1"/>
    <property type="molecule type" value="Genomic_DNA"/>
</dbReference>
<dbReference type="SMR" id="A4G9I9"/>
<dbReference type="STRING" id="204773.HEAR3067"/>
<dbReference type="KEGG" id="har:HEAR3067"/>
<dbReference type="eggNOG" id="COG0131">
    <property type="taxonomic scope" value="Bacteria"/>
</dbReference>
<dbReference type="HOGENOM" id="CLU_044308_3_0_4"/>
<dbReference type="OrthoDB" id="9790411at2"/>
<dbReference type="UniPathway" id="UPA00031">
    <property type="reaction ID" value="UER00011"/>
</dbReference>
<dbReference type="Proteomes" id="UP000006697">
    <property type="component" value="Chromosome"/>
</dbReference>
<dbReference type="GO" id="GO:0005737">
    <property type="term" value="C:cytoplasm"/>
    <property type="evidence" value="ECO:0007669"/>
    <property type="project" value="UniProtKB-SubCell"/>
</dbReference>
<dbReference type="GO" id="GO:0004424">
    <property type="term" value="F:imidazoleglycerol-phosphate dehydratase activity"/>
    <property type="evidence" value="ECO:0007669"/>
    <property type="project" value="UniProtKB-UniRule"/>
</dbReference>
<dbReference type="GO" id="GO:0000105">
    <property type="term" value="P:L-histidine biosynthetic process"/>
    <property type="evidence" value="ECO:0007669"/>
    <property type="project" value="UniProtKB-UniRule"/>
</dbReference>
<dbReference type="CDD" id="cd07914">
    <property type="entry name" value="IGPD"/>
    <property type="match status" value="1"/>
</dbReference>
<dbReference type="FunFam" id="3.30.230.40:FF:000002">
    <property type="entry name" value="Imidazoleglycerol-phosphate dehydratase"/>
    <property type="match status" value="1"/>
</dbReference>
<dbReference type="FunFam" id="3.30.230.40:FF:000003">
    <property type="entry name" value="Imidazoleglycerol-phosphate dehydratase HisB"/>
    <property type="match status" value="1"/>
</dbReference>
<dbReference type="Gene3D" id="3.30.230.40">
    <property type="entry name" value="Imidazole glycerol phosphate dehydratase, domain 1"/>
    <property type="match status" value="2"/>
</dbReference>
<dbReference type="HAMAP" id="MF_00076">
    <property type="entry name" value="HisB"/>
    <property type="match status" value="1"/>
</dbReference>
<dbReference type="InterPro" id="IPR038494">
    <property type="entry name" value="IGPD_sf"/>
</dbReference>
<dbReference type="InterPro" id="IPR000807">
    <property type="entry name" value="ImidazoleglycerolP_deHydtase"/>
</dbReference>
<dbReference type="InterPro" id="IPR020565">
    <property type="entry name" value="ImidazoleglycerP_deHydtase_CS"/>
</dbReference>
<dbReference type="InterPro" id="IPR020568">
    <property type="entry name" value="Ribosomal_Su5_D2-typ_SF"/>
</dbReference>
<dbReference type="NCBIfam" id="NF002106">
    <property type="entry name" value="PRK00951.1-1"/>
    <property type="match status" value="1"/>
</dbReference>
<dbReference type="NCBIfam" id="NF002109">
    <property type="entry name" value="PRK00951.1-5"/>
    <property type="match status" value="1"/>
</dbReference>
<dbReference type="NCBIfam" id="NF002111">
    <property type="entry name" value="PRK00951.2-1"/>
    <property type="match status" value="1"/>
</dbReference>
<dbReference type="NCBIfam" id="NF002114">
    <property type="entry name" value="PRK00951.2-4"/>
    <property type="match status" value="1"/>
</dbReference>
<dbReference type="PANTHER" id="PTHR23133:SF2">
    <property type="entry name" value="IMIDAZOLEGLYCEROL-PHOSPHATE DEHYDRATASE"/>
    <property type="match status" value="1"/>
</dbReference>
<dbReference type="PANTHER" id="PTHR23133">
    <property type="entry name" value="IMIDAZOLEGLYCEROL-PHOSPHATE DEHYDRATASE HIS7"/>
    <property type="match status" value="1"/>
</dbReference>
<dbReference type="Pfam" id="PF00475">
    <property type="entry name" value="IGPD"/>
    <property type="match status" value="1"/>
</dbReference>
<dbReference type="SUPFAM" id="SSF54211">
    <property type="entry name" value="Ribosomal protein S5 domain 2-like"/>
    <property type="match status" value="2"/>
</dbReference>
<dbReference type="PROSITE" id="PS00954">
    <property type="entry name" value="IGP_DEHYDRATASE_1"/>
    <property type="match status" value="1"/>
</dbReference>
<dbReference type="PROSITE" id="PS00955">
    <property type="entry name" value="IGP_DEHYDRATASE_2"/>
    <property type="match status" value="1"/>
</dbReference>
<proteinExistence type="inferred from homology"/>
<evidence type="ECO:0000255" key="1">
    <source>
        <dbReference type="HAMAP-Rule" id="MF_00076"/>
    </source>
</evidence>
<sequence>MSTSRTAEITRNTNETQIRVAINIDGTGQQKLNTGVPFLDHMLDQIARHGLIDLDIEAKGDLHIDAHHTVEDVGITLGQAFAKAIGDKKGIRRYGHSYVPLDEALSRVVIDFSGRPGLEFHVPFTRSMIGAFDVDLTREFFQGFVNHALVSMHIDNLRGANAHHQCETVFKAFGRALRMAIELDPRSAGTIPSTKGSL</sequence>
<accession>A4G9I9</accession>